<accession>Q9Y834</accession>
<name>PGLR1_PENOL</name>
<feature type="signal peptide" evidence="2">
    <location>
        <begin position="1"/>
        <end position="18"/>
    </location>
</feature>
<feature type="chain" id="PRO_0000024792" description="Polygalacturonase 1">
    <location>
        <begin position="19"/>
        <end position="370"/>
    </location>
</feature>
<feature type="repeat" description="PbH1 1" evidence="2">
    <location>
        <begin position="163"/>
        <end position="194"/>
    </location>
</feature>
<feature type="repeat" description="PbH1 2" evidence="2">
    <location>
        <begin position="195"/>
        <end position="216"/>
    </location>
</feature>
<feature type="repeat" description="PbH1 3" evidence="2">
    <location>
        <begin position="217"/>
        <end position="237"/>
    </location>
</feature>
<feature type="repeat" description="PbH1 4" evidence="2">
    <location>
        <begin position="246"/>
        <end position="267"/>
    </location>
</feature>
<feature type="repeat" description="PbH1 5" evidence="2">
    <location>
        <begin position="275"/>
        <end position="297"/>
    </location>
</feature>
<feature type="active site" description="Proton donor" evidence="1">
    <location>
        <position position="209"/>
    </location>
</feature>
<feature type="active site" evidence="4">
    <location>
        <position position="231"/>
    </location>
</feature>
<feature type="glycosylation site" description="N-linked (GlcNAc...) asparagine" evidence="3">
    <location>
        <position position="248"/>
    </location>
</feature>
<feature type="disulfide bond" evidence="1">
    <location>
        <begin position="36"/>
        <end position="51"/>
    </location>
</feature>
<feature type="disulfide bond" evidence="1">
    <location>
        <begin position="211"/>
        <end position="227"/>
    </location>
</feature>
<feature type="disulfide bond" evidence="1">
    <location>
        <begin position="337"/>
        <end position="342"/>
    </location>
</feature>
<feature type="disulfide bond" evidence="1">
    <location>
        <begin position="361"/>
        <end position="370"/>
    </location>
</feature>
<proteinExistence type="inferred from homology"/>
<protein>
    <recommendedName>
        <fullName>Polygalacturonase 1</fullName>
        <shortName>PG 1</shortName>
        <ecNumber>3.2.1.15</ecNumber>
    </recommendedName>
    <alternativeName>
        <fullName>Pectinase 1</fullName>
    </alternativeName>
</protein>
<dbReference type="EC" id="3.2.1.15"/>
<dbReference type="EMBL" id="AJ243521">
    <property type="protein sequence ID" value="CAB46908.1"/>
    <property type="molecule type" value="Genomic_DNA"/>
</dbReference>
<dbReference type="SMR" id="Q9Y834"/>
<dbReference type="CAZy" id="GH28">
    <property type="family name" value="Glycoside Hydrolase Family 28"/>
</dbReference>
<dbReference type="GlyCosmos" id="Q9Y834">
    <property type="glycosylation" value="1 site, No reported glycans"/>
</dbReference>
<dbReference type="OrthoDB" id="1546079at2759"/>
<dbReference type="GO" id="GO:0005576">
    <property type="term" value="C:extracellular region"/>
    <property type="evidence" value="ECO:0007669"/>
    <property type="project" value="UniProtKB-SubCell"/>
</dbReference>
<dbReference type="GO" id="GO:0004650">
    <property type="term" value="F:polygalacturonase activity"/>
    <property type="evidence" value="ECO:0007669"/>
    <property type="project" value="UniProtKB-EC"/>
</dbReference>
<dbReference type="GO" id="GO:0071555">
    <property type="term" value="P:cell wall organization"/>
    <property type="evidence" value="ECO:0007669"/>
    <property type="project" value="UniProtKB-KW"/>
</dbReference>
<dbReference type="GO" id="GO:0045490">
    <property type="term" value="P:pectin catabolic process"/>
    <property type="evidence" value="ECO:0007669"/>
    <property type="project" value="UniProtKB-ARBA"/>
</dbReference>
<dbReference type="FunFam" id="2.160.20.10:FF:000002">
    <property type="entry name" value="Endopolygalacturonase D"/>
    <property type="match status" value="1"/>
</dbReference>
<dbReference type="Gene3D" id="2.160.20.10">
    <property type="entry name" value="Single-stranded right-handed beta-helix, Pectin lyase-like"/>
    <property type="match status" value="1"/>
</dbReference>
<dbReference type="InterPro" id="IPR000743">
    <property type="entry name" value="Glyco_hydro_28"/>
</dbReference>
<dbReference type="InterPro" id="IPR050434">
    <property type="entry name" value="Glycosyl_hydrlase_28"/>
</dbReference>
<dbReference type="InterPro" id="IPR006626">
    <property type="entry name" value="PbH1"/>
</dbReference>
<dbReference type="InterPro" id="IPR012334">
    <property type="entry name" value="Pectin_lyas_fold"/>
</dbReference>
<dbReference type="InterPro" id="IPR011050">
    <property type="entry name" value="Pectin_lyase_fold/virulence"/>
</dbReference>
<dbReference type="PANTHER" id="PTHR31884:SF13">
    <property type="entry name" value="ENDOPOLYGALACTURONASE B"/>
    <property type="match status" value="1"/>
</dbReference>
<dbReference type="PANTHER" id="PTHR31884">
    <property type="entry name" value="POLYGALACTURONASE"/>
    <property type="match status" value="1"/>
</dbReference>
<dbReference type="Pfam" id="PF00295">
    <property type="entry name" value="Glyco_hydro_28"/>
    <property type="match status" value="1"/>
</dbReference>
<dbReference type="SMART" id="SM00710">
    <property type="entry name" value="PbH1"/>
    <property type="match status" value="5"/>
</dbReference>
<dbReference type="SUPFAM" id="SSF51126">
    <property type="entry name" value="Pectin lyase-like"/>
    <property type="match status" value="1"/>
</dbReference>
<dbReference type="PROSITE" id="PS00502">
    <property type="entry name" value="POLYGALACTURONASE"/>
    <property type="match status" value="1"/>
</dbReference>
<comment type="catalytic activity">
    <reaction>
        <text>(1,4-alpha-D-galacturonosyl)n+m + H2O = (1,4-alpha-D-galacturonosyl)n + (1,4-alpha-D-galacturonosyl)m.</text>
        <dbReference type="EC" id="3.2.1.15"/>
    </reaction>
</comment>
<comment type="subcellular location">
    <subcellularLocation>
        <location>Secreted</location>
    </subcellularLocation>
</comment>
<comment type="similarity">
    <text evidence="5">Belongs to the glycosyl hydrolase 28 family.</text>
</comment>
<sequence length="370" mass="38063">MRTSILSMLALGAAAVSAAPAAAAAPAELVERGSSCTFTSASAAKAGKKSCSSIVLDNIKVPAGETLDLSNLKSGTKVTFKGETTFGYKEWKGPLIRFSGKNIEVNGASGHVINGGGASWWDGKGTNGGKTKPKFFYAHSLDDSTITGLNVKNTPVQGFSVQADNLVLDHITIDNTDGDKTNGGHNTDAFDVGESTYITISNANIKNQDDCLAINSGENIIFTGGTCSGGHGLSIGSVGGRDDNTVKNVTISDSTVSNSDNGIRIKTIYKAKGEVADVTFSNIELSNIAKYGIVIEQDYENGSPTGKPTTGVPITGLTVEKVTGSVKSSGTDVYILCGSGSCSDWTWSGNKVSGGKTSSKCKNVPSGASC</sequence>
<gene>
    <name type="primary">PG1</name>
</gene>
<reference key="1">
    <citation type="journal article" date="2000" name="FEMS Microbiol. Lett.">
        <title>Cloning and targeted disruption of two polygalacturonase genes in Penicillium olsonii.</title>
        <authorList>
            <person name="Wagner F."/>
            <person name="Kusserow H."/>
            <person name="Schaefer W."/>
        </authorList>
    </citation>
    <scope>NUCLEOTIDE SEQUENCE [GENOMIC DNA]</scope>
</reference>
<organism>
    <name type="scientific">Penicillium olsonii</name>
    <dbReference type="NCBI Taxonomy" id="99116"/>
    <lineage>
        <taxon>Eukaryota</taxon>
        <taxon>Fungi</taxon>
        <taxon>Dikarya</taxon>
        <taxon>Ascomycota</taxon>
        <taxon>Pezizomycotina</taxon>
        <taxon>Eurotiomycetes</taxon>
        <taxon>Eurotiomycetidae</taxon>
        <taxon>Eurotiales</taxon>
        <taxon>Aspergillaceae</taxon>
        <taxon>Penicillium</taxon>
    </lineage>
</organism>
<evidence type="ECO:0000250" key="1">
    <source>
        <dbReference type="UniProtKB" id="O74213"/>
    </source>
</evidence>
<evidence type="ECO:0000255" key="2"/>
<evidence type="ECO:0000255" key="3">
    <source>
        <dbReference type="PROSITE-ProRule" id="PRU00498"/>
    </source>
</evidence>
<evidence type="ECO:0000255" key="4">
    <source>
        <dbReference type="PROSITE-ProRule" id="PRU10052"/>
    </source>
</evidence>
<evidence type="ECO:0000305" key="5"/>
<keyword id="KW-0961">Cell wall biogenesis/degradation</keyword>
<keyword id="KW-1015">Disulfide bond</keyword>
<keyword id="KW-0325">Glycoprotein</keyword>
<keyword id="KW-0326">Glycosidase</keyword>
<keyword id="KW-0378">Hydrolase</keyword>
<keyword id="KW-0677">Repeat</keyword>
<keyword id="KW-0964">Secreted</keyword>
<keyword id="KW-0732">Signal</keyword>